<feature type="peptide" id="PRO_0000043540" description="Brevinin-1La">
    <location>
        <begin position="1"/>
        <end position="24"/>
    </location>
</feature>
<feature type="disulfide bond" evidence="1">
    <location>
        <begin position="18"/>
        <end position="24"/>
    </location>
</feature>
<sequence>FLPMLAGLAASMVPKLVCLITKKC</sequence>
<organism>
    <name type="scientific">Rana luteiventris</name>
    <name type="common">Columbia spotted frog</name>
    <name type="synonym">Rana pretiosa luteiventris</name>
    <dbReference type="NCBI Taxonomy" id="58176"/>
    <lineage>
        <taxon>Eukaryota</taxon>
        <taxon>Metazoa</taxon>
        <taxon>Chordata</taxon>
        <taxon>Craniata</taxon>
        <taxon>Vertebrata</taxon>
        <taxon>Euteleostomi</taxon>
        <taxon>Amphibia</taxon>
        <taxon>Batrachia</taxon>
        <taxon>Anura</taxon>
        <taxon>Neobatrachia</taxon>
        <taxon>Ranoidea</taxon>
        <taxon>Ranidae</taxon>
        <taxon>Rana</taxon>
        <taxon>Rana</taxon>
    </lineage>
</organism>
<comment type="function">
    <text evidence="2">Antibacterial activity against Gram-positive bacterium S.aureus and Gram-negative bacterium E.coli.</text>
</comment>
<comment type="subcellular location">
    <subcellularLocation>
        <location>Secreted</location>
    </subcellularLocation>
</comment>
<comment type="tissue specificity">
    <text>Expressed by the skin glands.</text>
</comment>
<comment type="mass spectrometry"/>
<comment type="similarity">
    <text evidence="3">Belongs to the frog skin active peptide (FSAP) family. Brevinin subfamily.</text>
</comment>
<evidence type="ECO:0000250" key="1"/>
<evidence type="ECO:0000269" key="2">
    <source>
    </source>
</evidence>
<evidence type="ECO:0000305" key="3"/>
<reference key="1">
    <citation type="journal article" date="2000" name="Eur. J. Biochem.">
        <title>Peptides with antimicrobial activity from four different families isolated from the skins of the North American frogs Rana luteiventris, Rana berlandieri and Rana pipiens.</title>
        <authorList>
            <person name="Goraya J."/>
            <person name="Wang Y."/>
            <person name="Li Z."/>
            <person name="O'Flaherty M."/>
            <person name="Knoop F.C."/>
            <person name="Platz J.E."/>
            <person name="Conlon J.M."/>
        </authorList>
    </citation>
    <scope>PROTEIN SEQUENCE</scope>
    <scope>FUNCTION</scope>
    <scope>MASS SPECTROMETRY</scope>
    <source>
        <tissue>Skin secretion</tissue>
    </source>
</reference>
<proteinExistence type="evidence at protein level"/>
<keyword id="KW-0878">Amphibian defense peptide</keyword>
<keyword id="KW-0044">Antibiotic</keyword>
<keyword id="KW-0929">Antimicrobial</keyword>
<keyword id="KW-0903">Direct protein sequencing</keyword>
<keyword id="KW-1015">Disulfide bond</keyword>
<keyword id="KW-0964">Secreted</keyword>
<protein>
    <recommendedName>
        <fullName>Brevinin-1La</fullName>
    </recommendedName>
</protein>
<name>BR1A_RANLU</name>
<dbReference type="GO" id="GO:0005576">
    <property type="term" value="C:extracellular region"/>
    <property type="evidence" value="ECO:0007669"/>
    <property type="project" value="UniProtKB-SubCell"/>
</dbReference>
<dbReference type="GO" id="GO:0042742">
    <property type="term" value="P:defense response to bacterium"/>
    <property type="evidence" value="ECO:0007669"/>
    <property type="project" value="UniProtKB-KW"/>
</dbReference>
<dbReference type="InterPro" id="IPR012520">
    <property type="entry name" value="Antimicrobial_frog_1"/>
</dbReference>
<dbReference type="Pfam" id="PF08018">
    <property type="entry name" value="Antimicrobial_1"/>
    <property type="match status" value="1"/>
</dbReference>
<accession>P82825</accession>